<evidence type="ECO:0000250" key="1"/>
<evidence type="ECO:0000255" key="2">
    <source>
        <dbReference type="PROSITE-ProRule" id="PRU00108"/>
    </source>
</evidence>
<evidence type="ECO:0000255" key="3">
    <source>
        <dbReference type="PROSITE-ProRule" id="PRU00374"/>
    </source>
</evidence>
<evidence type="ECO:0000256" key="4">
    <source>
        <dbReference type="SAM" id="MobiDB-lite"/>
    </source>
</evidence>
<evidence type="ECO:0000305" key="5"/>
<gene>
    <name type="primary">ONECUT3</name>
</gene>
<name>ONEC3_HUMAN</name>
<dbReference type="EMBL" id="AC004755">
    <property type="protein sequence ID" value="AAC17602.1"/>
    <property type="molecule type" value="Genomic_DNA"/>
</dbReference>
<dbReference type="EMBL" id="AC005256">
    <property type="status" value="NOT_ANNOTATED_CDS"/>
    <property type="molecule type" value="Genomic_DNA"/>
</dbReference>
<dbReference type="CCDS" id="CCDS45900.1"/>
<dbReference type="RefSeq" id="NP_001073957.1">
    <property type="nucleotide sequence ID" value="NM_001080488.2"/>
</dbReference>
<dbReference type="SMR" id="O60422"/>
<dbReference type="BioGRID" id="133716">
    <property type="interactions" value="5"/>
</dbReference>
<dbReference type="FunCoup" id="O60422">
    <property type="interactions" value="339"/>
</dbReference>
<dbReference type="IntAct" id="O60422">
    <property type="interactions" value="6"/>
</dbReference>
<dbReference type="MINT" id="O60422"/>
<dbReference type="STRING" id="9606.ENSP00000371786"/>
<dbReference type="iPTMnet" id="O60422"/>
<dbReference type="PhosphoSitePlus" id="O60422"/>
<dbReference type="BioMuta" id="ONECUT3"/>
<dbReference type="jPOST" id="O60422"/>
<dbReference type="MassIVE" id="O60422"/>
<dbReference type="PaxDb" id="9606-ENSP00000371786"/>
<dbReference type="PeptideAtlas" id="O60422"/>
<dbReference type="ProteomicsDB" id="49395"/>
<dbReference type="Antibodypedia" id="5527">
    <property type="antibodies" value="144 antibodies from 19 providers"/>
</dbReference>
<dbReference type="DNASU" id="390874"/>
<dbReference type="Ensembl" id="ENST00000382349.5">
    <property type="protein sequence ID" value="ENSP00000371786.4"/>
    <property type="gene ID" value="ENSG00000205922.5"/>
</dbReference>
<dbReference type="GeneID" id="390874"/>
<dbReference type="KEGG" id="hsa:390874"/>
<dbReference type="MANE-Select" id="ENST00000382349.5">
    <property type="protein sequence ID" value="ENSP00000371786.4"/>
    <property type="RefSeq nucleotide sequence ID" value="NM_001080488.2"/>
    <property type="RefSeq protein sequence ID" value="NP_001073957.1"/>
</dbReference>
<dbReference type="UCSC" id="uc010xgr.3">
    <property type="organism name" value="human"/>
</dbReference>
<dbReference type="AGR" id="HGNC:13399"/>
<dbReference type="CTD" id="390874"/>
<dbReference type="DisGeNET" id="390874"/>
<dbReference type="GeneCards" id="ONECUT3"/>
<dbReference type="HGNC" id="HGNC:13399">
    <property type="gene designation" value="ONECUT3"/>
</dbReference>
<dbReference type="HPA" id="ENSG00000205922">
    <property type="expression patterns" value="Tissue enhanced (retina, stomach)"/>
</dbReference>
<dbReference type="MIM" id="611294">
    <property type="type" value="gene"/>
</dbReference>
<dbReference type="neXtProt" id="NX_O60422"/>
<dbReference type="OpenTargets" id="ENSG00000205922"/>
<dbReference type="PharmGKB" id="PA31926"/>
<dbReference type="VEuPathDB" id="HostDB:ENSG00000205922"/>
<dbReference type="eggNOG" id="KOG2252">
    <property type="taxonomic scope" value="Eukaryota"/>
</dbReference>
<dbReference type="GeneTree" id="ENSGT00950000183103"/>
<dbReference type="HOGENOM" id="CLU_018642_0_0_1"/>
<dbReference type="InParanoid" id="O60422"/>
<dbReference type="OMA" id="WHDDHGA"/>
<dbReference type="OrthoDB" id="10068888at2759"/>
<dbReference type="PAN-GO" id="O60422">
    <property type="GO annotations" value="4 GO annotations based on evolutionary models"/>
</dbReference>
<dbReference type="PhylomeDB" id="O60422"/>
<dbReference type="TreeFam" id="TF318206"/>
<dbReference type="PathwayCommons" id="O60422"/>
<dbReference type="Reactome" id="R-HSA-210744">
    <property type="pathway name" value="Regulation of gene expression in late stage (branching morphogenesis) pancreatic bud precursor cells"/>
</dbReference>
<dbReference type="Reactome" id="R-HSA-210747">
    <property type="pathway name" value="Regulation of gene expression in early pancreatic precursor cells"/>
</dbReference>
<dbReference type="SignaLink" id="O60422"/>
<dbReference type="BioGRID-ORCS" id="390874">
    <property type="hits" value="17 hits in 1170 CRISPR screens"/>
</dbReference>
<dbReference type="GenomeRNAi" id="390874"/>
<dbReference type="Pharos" id="O60422">
    <property type="development level" value="Tbio"/>
</dbReference>
<dbReference type="PRO" id="PR:O60422"/>
<dbReference type="Proteomes" id="UP000005640">
    <property type="component" value="Chromosome 19"/>
</dbReference>
<dbReference type="RNAct" id="O60422">
    <property type="molecule type" value="protein"/>
</dbReference>
<dbReference type="Bgee" id="ENSG00000205922">
    <property type="expression patterns" value="Expressed in buccal mucosa cell and 17 other cell types or tissues"/>
</dbReference>
<dbReference type="GO" id="GO:0000785">
    <property type="term" value="C:chromatin"/>
    <property type="evidence" value="ECO:0000247"/>
    <property type="project" value="NTNU_SB"/>
</dbReference>
<dbReference type="GO" id="GO:0005634">
    <property type="term" value="C:nucleus"/>
    <property type="evidence" value="ECO:0000318"/>
    <property type="project" value="GO_Central"/>
</dbReference>
<dbReference type="GO" id="GO:0005667">
    <property type="term" value="C:transcription regulator complex"/>
    <property type="evidence" value="ECO:0007669"/>
    <property type="project" value="Ensembl"/>
</dbReference>
<dbReference type="GO" id="GO:0001228">
    <property type="term" value="F:DNA-binding transcription activator activity, RNA polymerase II-specific"/>
    <property type="evidence" value="ECO:0007669"/>
    <property type="project" value="Ensembl"/>
</dbReference>
<dbReference type="GO" id="GO:0000981">
    <property type="term" value="F:DNA-binding transcription factor activity, RNA polymerase II-specific"/>
    <property type="evidence" value="ECO:0000247"/>
    <property type="project" value="NTNU_SB"/>
</dbReference>
<dbReference type="GO" id="GO:0000978">
    <property type="term" value="F:RNA polymerase II cis-regulatory region sequence-specific DNA binding"/>
    <property type="evidence" value="ECO:0000318"/>
    <property type="project" value="GO_Central"/>
</dbReference>
<dbReference type="GO" id="GO:1990837">
    <property type="term" value="F:sequence-specific double-stranded DNA binding"/>
    <property type="evidence" value="ECO:0000314"/>
    <property type="project" value="ARUK-UCL"/>
</dbReference>
<dbReference type="GO" id="GO:0006357">
    <property type="term" value="P:regulation of transcription by RNA polymerase II"/>
    <property type="evidence" value="ECO:0000318"/>
    <property type="project" value="GO_Central"/>
</dbReference>
<dbReference type="CDD" id="cd00086">
    <property type="entry name" value="homeodomain"/>
    <property type="match status" value="1"/>
</dbReference>
<dbReference type="FunFam" id="1.10.10.60:FF:000054">
    <property type="entry name" value="One cut domain family member"/>
    <property type="match status" value="1"/>
</dbReference>
<dbReference type="FunFam" id="1.10.260.40:FF:000005">
    <property type="entry name" value="One cut domain family member"/>
    <property type="match status" value="1"/>
</dbReference>
<dbReference type="Gene3D" id="1.10.10.60">
    <property type="entry name" value="Homeodomain-like"/>
    <property type="match status" value="1"/>
</dbReference>
<dbReference type="Gene3D" id="1.10.260.40">
    <property type="entry name" value="lambda repressor-like DNA-binding domains"/>
    <property type="match status" value="1"/>
</dbReference>
<dbReference type="InterPro" id="IPR003350">
    <property type="entry name" value="CUT_dom"/>
</dbReference>
<dbReference type="InterPro" id="IPR051649">
    <property type="entry name" value="CUT_Homeobox"/>
</dbReference>
<dbReference type="InterPro" id="IPR001356">
    <property type="entry name" value="HD"/>
</dbReference>
<dbReference type="InterPro" id="IPR009057">
    <property type="entry name" value="Homeodomain-like_sf"/>
</dbReference>
<dbReference type="InterPro" id="IPR010982">
    <property type="entry name" value="Lambda_DNA-bd_dom_sf"/>
</dbReference>
<dbReference type="PANTHER" id="PTHR14057:SF34">
    <property type="entry name" value="ONE CUT DOMAIN FAMILY MEMBER 3"/>
    <property type="match status" value="1"/>
</dbReference>
<dbReference type="PANTHER" id="PTHR14057">
    <property type="entry name" value="TRANSCRIPTION FACTOR ONECUT"/>
    <property type="match status" value="1"/>
</dbReference>
<dbReference type="Pfam" id="PF02376">
    <property type="entry name" value="CUT"/>
    <property type="match status" value="1"/>
</dbReference>
<dbReference type="Pfam" id="PF00046">
    <property type="entry name" value="Homeodomain"/>
    <property type="match status" value="1"/>
</dbReference>
<dbReference type="SMART" id="SM01109">
    <property type="entry name" value="CUT"/>
    <property type="match status" value="1"/>
</dbReference>
<dbReference type="SMART" id="SM00389">
    <property type="entry name" value="HOX"/>
    <property type="match status" value="1"/>
</dbReference>
<dbReference type="SUPFAM" id="SSF46689">
    <property type="entry name" value="Homeodomain-like"/>
    <property type="match status" value="1"/>
</dbReference>
<dbReference type="SUPFAM" id="SSF47413">
    <property type="entry name" value="lambda repressor-like DNA-binding domains"/>
    <property type="match status" value="1"/>
</dbReference>
<dbReference type="PROSITE" id="PS51042">
    <property type="entry name" value="CUT"/>
    <property type="match status" value="1"/>
</dbReference>
<dbReference type="PROSITE" id="PS50071">
    <property type="entry name" value="HOMEOBOX_2"/>
    <property type="match status" value="1"/>
</dbReference>
<keyword id="KW-0010">Activator</keyword>
<keyword id="KW-0238">DNA-binding</keyword>
<keyword id="KW-0371">Homeobox</keyword>
<keyword id="KW-0539">Nucleus</keyword>
<keyword id="KW-1267">Proteomics identification</keyword>
<keyword id="KW-1185">Reference proteome</keyword>
<keyword id="KW-0804">Transcription</keyword>
<keyword id="KW-0805">Transcription regulation</keyword>
<organism>
    <name type="scientific">Homo sapiens</name>
    <name type="common">Human</name>
    <dbReference type="NCBI Taxonomy" id="9606"/>
    <lineage>
        <taxon>Eukaryota</taxon>
        <taxon>Metazoa</taxon>
        <taxon>Chordata</taxon>
        <taxon>Craniata</taxon>
        <taxon>Vertebrata</taxon>
        <taxon>Euteleostomi</taxon>
        <taxon>Mammalia</taxon>
        <taxon>Eutheria</taxon>
        <taxon>Euarchontoglires</taxon>
        <taxon>Primates</taxon>
        <taxon>Haplorrhini</taxon>
        <taxon>Catarrhini</taxon>
        <taxon>Hominidae</taxon>
        <taxon>Homo</taxon>
    </lineage>
</organism>
<sequence length="494" mass="50037">MELSLESLGGLHSVAHAQAGELLSPGHARSAAAQHRGLVAPGRPGLVAGMASLLDGGGGGGGGGAGGAGGAGSAGGGADFRGELAGPLHPAMGMACEAPGLGGTYTTLTPLQHLPPLAAVADKFHQHAAAAAVAGAHGGHPHAHPHPAAAPPPPPPPQRLAASVSGSFTLMRDERAALASVGHLYGPYGKELPAMGSPLSPLPNALPPALHGAPQPPPPPPPPPLAAYGPPGHLAGDKLLPPAAFEPHAALLGRAEDALARGLPGGGGGTGSGGAGSGSAAGLLAPLGGLAAAGAHGPHGGGGGPGGSGGGPSAGAAAEEINTKEVAQRITAELKRYSIPQAIFAQRILCRSQGTLSDLLRNPKPWSKLKSGRETFRRMWKWLQEPEFQRMSALRLAACKRKEQEQQKERALQPKKQRLVFTDLQRRTLIAIFKENKRPSKEMQVTISQQLGLELNTVSNFFMNARRRCMNRWAEEPSTAPGGPAGATATFSKA</sequence>
<feature type="chain" id="PRO_0000271218" description="One cut domain family member 3">
    <location>
        <begin position="1"/>
        <end position="494"/>
    </location>
</feature>
<feature type="DNA-binding region" description="CUT" evidence="3">
    <location>
        <begin position="312"/>
        <end position="398"/>
    </location>
</feature>
<feature type="DNA-binding region" description="Homeobox" evidence="2">
    <location>
        <begin position="414"/>
        <end position="473"/>
    </location>
</feature>
<feature type="region of interest" description="Disordered" evidence="4">
    <location>
        <begin position="130"/>
        <end position="162"/>
    </location>
</feature>
<feature type="region of interest" description="Disordered" evidence="4">
    <location>
        <begin position="199"/>
        <end position="239"/>
    </location>
</feature>
<feature type="region of interest" description="Disordered" evidence="4">
    <location>
        <begin position="295"/>
        <end position="319"/>
    </location>
</feature>
<feature type="region of interest" description="Disordered" evidence="4">
    <location>
        <begin position="475"/>
        <end position="494"/>
    </location>
</feature>
<feature type="compositionally biased region" description="Pro residues" evidence="4">
    <location>
        <begin position="148"/>
        <end position="158"/>
    </location>
</feature>
<feature type="compositionally biased region" description="Pro residues" evidence="4">
    <location>
        <begin position="214"/>
        <end position="225"/>
    </location>
</feature>
<feature type="compositionally biased region" description="Gly residues" evidence="4">
    <location>
        <begin position="297"/>
        <end position="313"/>
    </location>
</feature>
<feature type="compositionally biased region" description="Low complexity" evidence="4">
    <location>
        <begin position="476"/>
        <end position="494"/>
    </location>
</feature>
<reference key="1">
    <citation type="journal article" date="2004" name="Nature">
        <title>The DNA sequence and biology of human chromosome 19.</title>
        <authorList>
            <person name="Grimwood J."/>
            <person name="Gordon L.A."/>
            <person name="Olsen A.S."/>
            <person name="Terry A."/>
            <person name="Schmutz J."/>
            <person name="Lamerdin J.E."/>
            <person name="Hellsten U."/>
            <person name="Goodstein D."/>
            <person name="Couronne O."/>
            <person name="Tran-Gyamfi M."/>
            <person name="Aerts A."/>
            <person name="Altherr M."/>
            <person name="Ashworth L."/>
            <person name="Bajorek E."/>
            <person name="Black S."/>
            <person name="Branscomb E."/>
            <person name="Caenepeel S."/>
            <person name="Carrano A.V."/>
            <person name="Caoile C."/>
            <person name="Chan Y.M."/>
            <person name="Christensen M."/>
            <person name="Cleland C.A."/>
            <person name="Copeland A."/>
            <person name="Dalin E."/>
            <person name="Dehal P."/>
            <person name="Denys M."/>
            <person name="Detter J.C."/>
            <person name="Escobar J."/>
            <person name="Flowers D."/>
            <person name="Fotopulos D."/>
            <person name="Garcia C."/>
            <person name="Georgescu A.M."/>
            <person name="Glavina T."/>
            <person name="Gomez M."/>
            <person name="Gonzales E."/>
            <person name="Groza M."/>
            <person name="Hammon N."/>
            <person name="Hawkins T."/>
            <person name="Haydu L."/>
            <person name="Ho I."/>
            <person name="Huang W."/>
            <person name="Israni S."/>
            <person name="Jett J."/>
            <person name="Kadner K."/>
            <person name="Kimball H."/>
            <person name="Kobayashi A."/>
            <person name="Larionov V."/>
            <person name="Leem S.-H."/>
            <person name="Lopez F."/>
            <person name="Lou Y."/>
            <person name="Lowry S."/>
            <person name="Malfatti S."/>
            <person name="Martinez D."/>
            <person name="McCready P.M."/>
            <person name="Medina C."/>
            <person name="Morgan J."/>
            <person name="Nelson K."/>
            <person name="Nolan M."/>
            <person name="Ovcharenko I."/>
            <person name="Pitluck S."/>
            <person name="Pollard M."/>
            <person name="Popkie A.P."/>
            <person name="Predki P."/>
            <person name="Quan G."/>
            <person name="Ramirez L."/>
            <person name="Rash S."/>
            <person name="Retterer J."/>
            <person name="Rodriguez A."/>
            <person name="Rogers S."/>
            <person name="Salamov A."/>
            <person name="Salazar A."/>
            <person name="She X."/>
            <person name="Smith D."/>
            <person name="Slezak T."/>
            <person name="Solovyev V."/>
            <person name="Thayer N."/>
            <person name="Tice H."/>
            <person name="Tsai M."/>
            <person name="Ustaszewska A."/>
            <person name="Vo N."/>
            <person name="Wagner M."/>
            <person name="Wheeler J."/>
            <person name="Wu K."/>
            <person name="Xie G."/>
            <person name="Yang J."/>
            <person name="Dubchak I."/>
            <person name="Furey T.S."/>
            <person name="DeJong P."/>
            <person name="Dickson M."/>
            <person name="Gordon D."/>
            <person name="Eichler E.E."/>
            <person name="Pennacchio L.A."/>
            <person name="Richardson P."/>
            <person name="Stubbs L."/>
            <person name="Rokhsar D.S."/>
            <person name="Myers R.M."/>
            <person name="Rubin E.M."/>
            <person name="Lucas S.M."/>
        </authorList>
    </citation>
    <scope>NUCLEOTIDE SEQUENCE [LARGE SCALE GENOMIC DNA]</scope>
</reference>
<reference key="2">
    <citation type="journal article" date="2002" name="Biochem. Biophys. Res. Commun.">
        <title>OC-3, a novel mammalian member of the ONECUT class of transcription factors.</title>
        <authorList>
            <person name="Vanhorenbeeck V."/>
            <person name="Jacquemin P."/>
            <person name="Lemaigre F.P."/>
            <person name="Rousseau G.G."/>
        </authorList>
    </citation>
    <scope>IDENTIFICATION</scope>
</reference>
<proteinExistence type="evidence at protein level"/>
<comment type="function">
    <text evidence="1">Transcriptional activator. Binds the consensus DNA sequence 5'-DHWATTGAYTWWD-3' on a variety of gene promoters such as those of HNF3B and TTR (By similarity).</text>
</comment>
<comment type="interaction">
    <interactant intactId="EBI-17431136">
        <id>O60422</id>
    </interactant>
    <interactant intactId="EBI-372594">
        <id>Q99828</id>
        <label>CIB1</label>
    </interactant>
    <organismsDiffer>false</organismsDiffer>
    <experiments>3</experiments>
</comment>
<comment type="interaction">
    <interactant intactId="EBI-17431136">
        <id>O60422</id>
    </interactant>
    <interactant intactId="EBI-713635">
        <id>O43639</id>
        <label>NCK2</label>
    </interactant>
    <organismsDiffer>false</organismsDiffer>
    <experiments>3</experiments>
</comment>
<comment type="interaction">
    <interactant intactId="EBI-17431136">
        <id>O60422</id>
    </interactant>
    <interactant intactId="EBI-12030590">
        <id>Q9H0C1</id>
        <label>ZMYND12</label>
    </interactant>
    <organismsDiffer>false</organismsDiffer>
    <experiments>3</experiments>
</comment>
<comment type="subcellular location">
    <subcellularLocation>
        <location evidence="2 3">Nucleus</location>
    </subcellularLocation>
</comment>
<comment type="similarity">
    <text evidence="5">Belongs to the CUT homeobox family.</text>
</comment>
<protein>
    <recommendedName>
        <fullName>One cut domain family member 3</fullName>
    </recommendedName>
    <alternativeName>
        <fullName>One cut homeobox 3</fullName>
    </alternativeName>
    <alternativeName>
        <fullName>Transcription factor ONECUT-3</fullName>
        <shortName>OC-3</shortName>
    </alternativeName>
</protein>
<accession>O60422</accession>
<accession>A8MZM7</accession>